<reference key="1">
    <citation type="journal article" date="2008" name="BMC Genomics">
        <title>Genome sequence and rapid evolution of the rice pathogen Xanthomonas oryzae pv. oryzae PXO99A.</title>
        <authorList>
            <person name="Salzberg S.L."/>
            <person name="Sommer D.D."/>
            <person name="Schatz M.C."/>
            <person name="Phillippy A.M."/>
            <person name="Rabinowicz P.D."/>
            <person name="Tsuge S."/>
            <person name="Furutani A."/>
            <person name="Ochiai H."/>
            <person name="Delcher A.L."/>
            <person name="Kelley D."/>
            <person name="Madupu R."/>
            <person name="Puiu D."/>
            <person name="Radune D."/>
            <person name="Shumway M."/>
            <person name="Trapnell C."/>
            <person name="Aparna G."/>
            <person name="Jha G."/>
            <person name="Pandey A."/>
            <person name="Patil P.B."/>
            <person name="Ishihara H."/>
            <person name="Meyer D.F."/>
            <person name="Szurek B."/>
            <person name="Verdier V."/>
            <person name="Koebnik R."/>
            <person name="Dow J.M."/>
            <person name="Ryan R.P."/>
            <person name="Hirata H."/>
            <person name="Tsuyumu S."/>
            <person name="Won Lee S."/>
            <person name="Seo Y.-S."/>
            <person name="Sriariyanum M."/>
            <person name="Ronald P.C."/>
            <person name="Sonti R.V."/>
            <person name="Van Sluys M.-A."/>
            <person name="Leach J.E."/>
            <person name="White F.F."/>
            <person name="Bogdanove A.J."/>
        </authorList>
    </citation>
    <scope>NUCLEOTIDE SEQUENCE [LARGE SCALE GENOMIC DNA]</scope>
    <source>
        <strain>PXO99A</strain>
    </source>
</reference>
<protein>
    <recommendedName>
        <fullName evidence="1">Chromosomal replication initiator protein DnaA</fullName>
    </recommendedName>
</protein>
<gene>
    <name evidence="1" type="primary">dnaA</name>
    <name type="ordered locus">PXO_03483</name>
</gene>
<accession>B2SUW3</accession>
<sequence length="442" mass="49513">MDAWPRCLERLEAEFPPEDVHTWLKPLQAEDRGDSIVLYAPNAFIVDQVRERYLPRIRELLAYFAGNGEVALAVGSRPRAPEPAPAPVAATIAPQAAPIAPFAGNLDSHYTFANFVEGRSNQLGLAAAIQAAQKPGDRAHNPLLLYGSTGLGKTHLMFAAGNALRQAKPAAKVMYLRSEQFFSAMIRALQDKAMDQFKRQFQQIDALLIDDIQFFAGKDRTQEEFFHTFNALFDGRQQIILTCDRYPREVEGLEPRLKSRLAWGLSVAIDPPDFETRAAIVLAKARERGAEIPDDVAFLIAKKMRSNVRDLEGALNTLVARANFTGRSITVEFAQETLRDLLRAQQQAIGIPNIQKTVADYYGLQMKDLLSKRRTRSLARPRQVAMALAKELTEHSLPEIGDAFAGRDHTTVLHACRQIRTLMEADGKLREDWEKLIRKLSE</sequence>
<organism>
    <name type="scientific">Xanthomonas oryzae pv. oryzae (strain PXO99A)</name>
    <dbReference type="NCBI Taxonomy" id="360094"/>
    <lineage>
        <taxon>Bacteria</taxon>
        <taxon>Pseudomonadati</taxon>
        <taxon>Pseudomonadota</taxon>
        <taxon>Gammaproteobacteria</taxon>
        <taxon>Lysobacterales</taxon>
        <taxon>Lysobacteraceae</taxon>
        <taxon>Xanthomonas</taxon>
    </lineage>
</organism>
<feature type="chain" id="PRO_1000122034" description="Chromosomal replication initiator protein DnaA">
    <location>
        <begin position="1"/>
        <end position="442"/>
    </location>
</feature>
<feature type="region of interest" description="Domain I, interacts with DnaA modulators" evidence="1">
    <location>
        <begin position="1"/>
        <end position="75"/>
    </location>
</feature>
<feature type="region of interest" description="Domain II" evidence="1">
    <location>
        <begin position="75"/>
        <end position="104"/>
    </location>
</feature>
<feature type="region of interest" description="Domain III, AAA+ region" evidence="1">
    <location>
        <begin position="105"/>
        <end position="322"/>
    </location>
</feature>
<feature type="region of interest" description="Domain IV, binds dsDNA" evidence="1">
    <location>
        <begin position="323"/>
        <end position="442"/>
    </location>
</feature>
<feature type="binding site" evidence="1">
    <location>
        <position position="150"/>
    </location>
    <ligand>
        <name>ATP</name>
        <dbReference type="ChEBI" id="CHEBI:30616"/>
    </ligand>
</feature>
<feature type="binding site" evidence="1">
    <location>
        <position position="152"/>
    </location>
    <ligand>
        <name>ATP</name>
        <dbReference type="ChEBI" id="CHEBI:30616"/>
    </ligand>
</feature>
<feature type="binding site" evidence="1">
    <location>
        <position position="153"/>
    </location>
    <ligand>
        <name>ATP</name>
        <dbReference type="ChEBI" id="CHEBI:30616"/>
    </ligand>
</feature>
<feature type="binding site" evidence="1">
    <location>
        <position position="154"/>
    </location>
    <ligand>
        <name>ATP</name>
        <dbReference type="ChEBI" id="CHEBI:30616"/>
    </ligand>
</feature>
<proteinExistence type="inferred from homology"/>
<dbReference type="EMBL" id="CP000967">
    <property type="protein sequence ID" value="ACD56668.1"/>
    <property type="molecule type" value="Genomic_DNA"/>
</dbReference>
<dbReference type="RefSeq" id="WP_011407161.1">
    <property type="nucleotide sequence ID" value="NC_010717.2"/>
</dbReference>
<dbReference type="SMR" id="B2SUW3"/>
<dbReference type="KEGG" id="xop:PXO_03483"/>
<dbReference type="eggNOG" id="COG0593">
    <property type="taxonomic scope" value="Bacteria"/>
</dbReference>
<dbReference type="HOGENOM" id="CLU_026910_0_1_6"/>
<dbReference type="Proteomes" id="UP000001740">
    <property type="component" value="Chromosome"/>
</dbReference>
<dbReference type="GO" id="GO:0005737">
    <property type="term" value="C:cytoplasm"/>
    <property type="evidence" value="ECO:0007669"/>
    <property type="project" value="UniProtKB-SubCell"/>
</dbReference>
<dbReference type="GO" id="GO:0005886">
    <property type="term" value="C:plasma membrane"/>
    <property type="evidence" value="ECO:0007669"/>
    <property type="project" value="TreeGrafter"/>
</dbReference>
<dbReference type="GO" id="GO:0005524">
    <property type="term" value="F:ATP binding"/>
    <property type="evidence" value="ECO:0007669"/>
    <property type="project" value="UniProtKB-UniRule"/>
</dbReference>
<dbReference type="GO" id="GO:0016887">
    <property type="term" value="F:ATP hydrolysis activity"/>
    <property type="evidence" value="ECO:0007669"/>
    <property type="project" value="InterPro"/>
</dbReference>
<dbReference type="GO" id="GO:0003688">
    <property type="term" value="F:DNA replication origin binding"/>
    <property type="evidence" value="ECO:0007669"/>
    <property type="project" value="UniProtKB-UniRule"/>
</dbReference>
<dbReference type="GO" id="GO:0008289">
    <property type="term" value="F:lipid binding"/>
    <property type="evidence" value="ECO:0007669"/>
    <property type="project" value="UniProtKB-KW"/>
</dbReference>
<dbReference type="GO" id="GO:0006270">
    <property type="term" value="P:DNA replication initiation"/>
    <property type="evidence" value="ECO:0007669"/>
    <property type="project" value="UniProtKB-UniRule"/>
</dbReference>
<dbReference type="GO" id="GO:0006275">
    <property type="term" value="P:regulation of DNA replication"/>
    <property type="evidence" value="ECO:0007669"/>
    <property type="project" value="UniProtKB-UniRule"/>
</dbReference>
<dbReference type="CDD" id="cd00009">
    <property type="entry name" value="AAA"/>
    <property type="match status" value="1"/>
</dbReference>
<dbReference type="CDD" id="cd06571">
    <property type="entry name" value="Bac_DnaA_C"/>
    <property type="match status" value="1"/>
</dbReference>
<dbReference type="FunFam" id="1.10.1750.10:FF:000001">
    <property type="entry name" value="Chromosomal replication initiator protein DnaA"/>
    <property type="match status" value="1"/>
</dbReference>
<dbReference type="FunFam" id="1.10.8.60:FF:000003">
    <property type="entry name" value="Chromosomal replication initiator protein DnaA"/>
    <property type="match status" value="1"/>
</dbReference>
<dbReference type="FunFam" id="3.40.50.300:FF:000103">
    <property type="entry name" value="Chromosomal replication initiator protein DnaA"/>
    <property type="match status" value="1"/>
</dbReference>
<dbReference type="Gene3D" id="1.10.1750.10">
    <property type="match status" value="1"/>
</dbReference>
<dbReference type="Gene3D" id="1.10.8.60">
    <property type="match status" value="1"/>
</dbReference>
<dbReference type="Gene3D" id="3.30.300.180">
    <property type="match status" value="1"/>
</dbReference>
<dbReference type="Gene3D" id="3.40.50.300">
    <property type="entry name" value="P-loop containing nucleotide triphosphate hydrolases"/>
    <property type="match status" value="1"/>
</dbReference>
<dbReference type="HAMAP" id="MF_00377">
    <property type="entry name" value="DnaA_bact"/>
    <property type="match status" value="1"/>
</dbReference>
<dbReference type="InterPro" id="IPR003593">
    <property type="entry name" value="AAA+_ATPase"/>
</dbReference>
<dbReference type="InterPro" id="IPR001957">
    <property type="entry name" value="Chromosome_initiator_DnaA"/>
</dbReference>
<dbReference type="InterPro" id="IPR020591">
    <property type="entry name" value="Chromosome_initiator_DnaA-like"/>
</dbReference>
<dbReference type="InterPro" id="IPR018312">
    <property type="entry name" value="Chromosome_initiator_DnaA_CS"/>
</dbReference>
<dbReference type="InterPro" id="IPR013159">
    <property type="entry name" value="DnaA_C"/>
</dbReference>
<dbReference type="InterPro" id="IPR013317">
    <property type="entry name" value="DnaA_dom"/>
</dbReference>
<dbReference type="InterPro" id="IPR024633">
    <property type="entry name" value="DnaA_N_dom"/>
</dbReference>
<dbReference type="InterPro" id="IPR038454">
    <property type="entry name" value="DnaA_N_sf"/>
</dbReference>
<dbReference type="InterPro" id="IPR027417">
    <property type="entry name" value="P-loop_NTPase"/>
</dbReference>
<dbReference type="InterPro" id="IPR010921">
    <property type="entry name" value="Trp_repressor/repl_initiator"/>
</dbReference>
<dbReference type="NCBIfam" id="TIGR00362">
    <property type="entry name" value="DnaA"/>
    <property type="match status" value="1"/>
</dbReference>
<dbReference type="PANTHER" id="PTHR30050">
    <property type="entry name" value="CHROMOSOMAL REPLICATION INITIATOR PROTEIN DNAA"/>
    <property type="match status" value="1"/>
</dbReference>
<dbReference type="PANTHER" id="PTHR30050:SF2">
    <property type="entry name" value="CHROMOSOMAL REPLICATION INITIATOR PROTEIN DNAA"/>
    <property type="match status" value="1"/>
</dbReference>
<dbReference type="Pfam" id="PF00308">
    <property type="entry name" value="Bac_DnaA"/>
    <property type="match status" value="1"/>
</dbReference>
<dbReference type="Pfam" id="PF08299">
    <property type="entry name" value="Bac_DnaA_C"/>
    <property type="match status" value="1"/>
</dbReference>
<dbReference type="Pfam" id="PF11638">
    <property type="entry name" value="DnaA_N"/>
    <property type="match status" value="1"/>
</dbReference>
<dbReference type="PRINTS" id="PR00051">
    <property type="entry name" value="DNAA"/>
</dbReference>
<dbReference type="SMART" id="SM00382">
    <property type="entry name" value="AAA"/>
    <property type="match status" value="1"/>
</dbReference>
<dbReference type="SMART" id="SM00760">
    <property type="entry name" value="Bac_DnaA_C"/>
    <property type="match status" value="1"/>
</dbReference>
<dbReference type="SUPFAM" id="SSF52540">
    <property type="entry name" value="P-loop containing nucleoside triphosphate hydrolases"/>
    <property type="match status" value="1"/>
</dbReference>
<dbReference type="SUPFAM" id="SSF48295">
    <property type="entry name" value="TrpR-like"/>
    <property type="match status" value="1"/>
</dbReference>
<dbReference type="PROSITE" id="PS01008">
    <property type="entry name" value="DNAA"/>
    <property type="match status" value="1"/>
</dbReference>
<keyword id="KW-0067">ATP-binding</keyword>
<keyword id="KW-0963">Cytoplasm</keyword>
<keyword id="KW-0235">DNA replication</keyword>
<keyword id="KW-0238">DNA-binding</keyword>
<keyword id="KW-0446">Lipid-binding</keyword>
<keyword id="KW-0547">Nucleotide-binding</keyword>
<comment type="function">
    <text evidence="1">Plays an essential role in the initiation and regulation of chromosomal replication. ATP-DnaA binds to the origin of replication (oriC) to initiate formation of the DNA replication initiation complex once per cell cycle. Binds the DnaA box (a 9 base pair repeat at the origin) and separates the double-stranded (ds)DNA. Forms a right-handed helical filament on oriC DNA; dsDNA binds to the exterior of the filament while single-stranded (ss)DNA is stabiized in the filament's interior. The ATP-DnaA-oriC complex binds and stabilizes one strand of the AT-rich DNA unwinding element (DUE), permitting loading of DNA polymerase. After initiation quickly degrades to an ADP-DnaA complex that is not apt for DNA replication. Binds acidic phospholipids.</text>
</comment>
<comment type="subunit">
    <text evidence="1">Oligomerizes as a right-handed, spiral filament on DNA at oriC.</text>
</comment>
<comment type="subcellular location">
    <subcellularLocation>
        <location evidence="1">Cytoplasm</location>
    </subcellularLocation>
</comment>
<comment type="domain">
    <text evidence="1">Domain I is involved in oligomerization and binding regulators, domain II is flexibile and of varying length in different bacteria, domain III forms the AAA+ region, while domain IV binds dsDNA.</text>
</comment>
<comment type="similarity">
    <text evidence="1">Belongs to the DnaA family.</text>
</comment>
<name>DNAA_XANOP</name>
<evidence type="ECO:0000255" key="1">
    <source>
        <dbReference type="HAMAP-Rule" id="MF_00377"/>
    </source>
</evidence>